<evidence type="ECO:0000255" key="1">
    <source>
        <dbReference type="HAMAP-Rule" id="MF_00478"/>
    </source>
</evidence>
<gene>
    <name evidence="1" type="primary">rsxE</name>
    <name type="ordered locus">SeHA_C1624</name>
</gene>
<comment type="function">
    <text evidence="1">Part of a membrane-bound complex that couples electron transfer with translocation of ions across the membrane. Required to maintain the reduced state of SoxR.</text>
</comment>
<comment type="subunit">
    <text evidence="1">The complex is composed of six subunits: RsxA, RsxB, RsxC, RsxD, RsxE and RsxG.</text>
</comment>
<comment type="subcellular location">
    <subcellularLocation>
        <location evidence="1">Cell inner membrane</location>
        <topology evidence="1">Multi-pass membrane protein</topology>
    </subcellularLocation>
</comment>
<comment type="similarity">
    <text evidence="1">Belongs to the NqrDE/RnfAE family.</text>
</comment>
<dbReference type="EC" id="7.-.-.-" evidence="1"/>
<dbReference type="EMBL" id="CP001120">
    <property type="protein sequence ID" value="ACF68741.1"/>
    <property type="molecule type" value="Genomic_DNA"/>
</dbReference>
<dbReference type="RefSeq" id="WP_001289628.1">
    <property type="nucleotide sequence ID" value="NC_011083.1"/>
</dbReference>
<dbReference type="SMR" id="B4THD1"/>
<dbReference type="KEGG" id="seh:SeHA_C1624"/>
<dbReference type="HOGENOM" id="CLU_046659_1_0_6"/>
<dbReference type="Proteomes" id="UP000001866">
    <property type="component" value="Chromosome"/>
</dbReference>
<dbReference type="GO" id="GO:0005886">
    <property type="term" value="C:plasma membrane"/>
    <property type="evidence" value="ECO:0007669"/>
    <property type="project" value="UniProtKB-SubCell"/>
</dbReference>
<dbReference type="GO" id="GO:0022900">
    <property type="term" value="P:electron transport chain"/>
    <property type="evidence" value="ECO:0007669"/>
    <property type="project" value="UniProtKB-UniRule"/>
</dbReference>
<dbReference type="HAMAP" id="MF_00478">
    <property type="entry name" value="RsxE_RnfE"/>
    <property type="match status" value="1"/>
</dbReference>
<dbReference type="InterPro" id="IPR003667">
    <property type="entry name" value="NqrDE/RnfAE"/>
</dbReference>
<dbReference type="InterPro" id="IPR010968">
    <property type="entry name" value="RnfE"/>
</dbReference>
<dbReference type="NCBIfam" id="NF009070">
    <property type="entry name" value="PRK12405.1"/>
    <property type="match status" value="1"/>
</dbReference>
<dbReference type="NCBIfam" id="TIGR01948">
    <property type="entry name" value="rnfE"/>
    <property type="match status" value="1"/>
</dbReference>
<dbReference type="PANTHER" id="PTHR30586">
    <property type="entry name" value="ELECTRON TRANSPORT COMPLEX PROTEIN RNFE"/>
    <property type="match status" value="1"/>
</dbReference>
<dbReference type="PANTHER" id="PTHR30586:SF0">
    <property type="entry name" value="ION-TRANSLOCATING OXIDOREDUCTASE COMPLEX SUBUNIT E"/>
    <property type="match status" value="1"/>
</dbReference>
<dbReference type="Pfam" id="PF02508">
    <property type="entry name" value="Rnf-Nqr"/>
    <property type="match status" value="1"/>
</dbReference>
<dbReference type="PIRSF" id="PIRSF006102">
    <property type="entry name" value="NQR_DE"/>
    <property type="match status" value="1"/>
</dbReference>
<keyword id="KW-0997">Cell inner membrane</keyword>
<keyword id="KW-1003">Cell membrane</keyword>
<keyword id="KW-0249">Electron transport</keyword>
<keyword id="KW-0472">Membrane</keyword>
<keyword id="KW-1278">Translocase</keyword>
<keyword id="KW-0812">Transmembrane</keyword>
<keyword id="KW-1133">Transmembrane helix</keyword>
<keyword id="KW-0813">Transport</keyword>
<organism>
    <name type="scientific">Salmonella heidelberg (strain SL476)</name>
    <dbReference type="NCBI Taxonomy" id="454169"/>
    <lineage>
        <taxon>Bacteria</taxon>
        <taxon>Pseudomonadati</taxon>
        <taxon>Pseudomonadota</taxon>
        <taxon>Gammaproteobacteria</taxon>
        <taxon>Enterobacterales</taxon>
        <taxon>Enterobacteriaceae</taxon>
        <taxon>Salmonella</taxon>
    </lineage>
</organism>
<protein>
    <recommendedName>
        <fullName evidence="1">Ion-translocating oxidoreductase complex subunit E</fullName>
        <ecNumber evidence="1">7.-.-.-</ecNumber>
    </recommendedName>
    <alternativeName>
        <fullName evidence="1">Rsx electron transport complex subunit E</fullName>
    </alternativeName>
</protein>
<accession>B4THD1</accession>
<feature type="chain" id="PRO_1000125862" description="Ion-translocating oxidoreductase complex subunit E">
    <location>
        <begin position="1"/>
        <end position="230"/>
    </location>
</feature>
<feature type="transmembrane region" description="Helical" evidence="1">
    <location>
        <begin position="18"/>
        <end position="38"/>
    </location>
</feature>
<feature type="transmembrane region" description="Helical" evidence="1">
    <location>
        <begin position="39"/>
        <end position="59"/>
    </location>
</feature>
<feature type="transmembrane region" description="Helical" evidence="1">
    <location>
        <begin position="63"/>
        <end position="83"/>
    </location>
</feature>
<feature type="transmembrane region" description="Helical" evidence="1">
    <location>
        <begin position="86"/>
        <end position="106"/>
    </location>
</feature>
<feature type="transmembrane region" description="Helical" evidence="1">
    <location>
        <begin position="125"/>
        <end position="145"/>
    </location>
</feature>
<feature type="transmembrane region" description="Helical" evidence="1">
    <location>
        <begin position="182"/>
        <end position="202"/>
    </location>
</feature>
<sequence length="230" mass="24318">MSEIKDIVVQGLWKNNSALVQLLGLCPLLAVTSTATNALGLGLATTLVLTLTNLTVSALRRWTPAEIRIPIYVMIIASVVSAVQMLINAYAFGLYQSLGIFIPLIVTNCIVVGRAEAFAAKKGPWLSALDGFSIGMGATGAMFVLGSLREILGNGTLFDGADSLLGGWAKVLRVEIFHTDSPFLLAMLPPGAFIGLGLMLAVKYLIDEKMKKRRAETAPSAVPAGETGKV</sequence>
<proteinExistence type="inferred from homology"/>
<name>RSXE_SALHS</name>
<reference key="1">
    <citation type="journal article" date="2011" name="J. Bacteriol.">
        <title>Comparative genomics of 28 Salmonella enterica isolates: evidence for CRISPR-mediated adaptive sublineage evolution.</title>
        <authorList>
            <person name="Fricke W.F."/>
            <person name="Mammel M.K."/>
            <person name="McDermott P.F."/>
            <person name="Tartera C."/>
            <person name="White D.G."/>
            <person name="Leclerc J.E."/>
            <person name="Ravel J."/>
            <person name="Cebula T.A."/>
        </authorList>
    </citation>
    <scope>NUCLEOTIDE SEQUENCE [LARGE SCALE GENOMIC DNA]</scope>
    <source>
        <strain>SL476</strain>
    </source>
</reference>